<proteinExistence type="evidence at protein level"/>
<name>C7352_ARATH</name>
<evidence type="ECO:0000250" key="1"/>
<evidence type="ECO:0000255" key="2"/>
<evidence type="ECO:0000269" key="3">
    <source>
    </source>
</evidence>
<evidence type="ECO:0000305" key="4"/>
<accession>Q9ZW95</accession>
<sequence length="512" mass="58463">MMVTLVLKYVLVIVMTLILRVLYDSICCYFLTPRRIKKFMERQGITGPKPRLLTGNIIDISKMLSHSASNDCSSIHHNIVPRLLPHYVSWSKQYGKRFIMWNGTEPRLCLTETEMIKELLTKHNPVTGKSWLQQQGTKGFIGRGLLMANGEAWHHQRHMAAPAFTRDRLKGYAKHMVECTKMMAERLRKEVGEEVEIGEEMRRLTADIISRTEFGSSCDKGKELFSLLTVLQRLCAQATRHLCFPGSRFLPSKYNREIKSLKTEVERLLMEIIDSRKDSVEIGRSSSYGDDLLGLLLNQMDSNKNNLNVQMIMDECKTFFFTGHETTSLLLTWTLMLLAHNPTWQDNVRDEVRQVCGQDGVPSVEQLSSLTSLNKVINESLRLYPPATLLPRMAFEDIKLGDLIIPKGLSIWIPVLAIHHSNELWGEDANEFNPERFTTRSFASSRHFMPFAAGPRNCIGQTFAMMEAKIILAMLVSKFSFAISENYRHAPIVVLTIKPKYGVQLVLKPLDL</sequence>
<comment type="function">
    <text evidence="3">Cytokinin hydroxylase that catalyzes the biosynthesis of trans-zeatin via the isopentenyladenine riboside 5'-monophosphate (iPRMP)-dependent pathway. Can use isopentenyladenosine-5'-monophosphate, isopentenyladenosine-5'-diphosphate and isopentenyladenosine-5'-triphosphate as substrate.</text>
</comment>
<comment type="catalytic activity">
    <reaction>
        <text>N(6)-(dimethylallyl)adenosine 5'-phosphate + NADPH + O2 + H(+) = 9-ribosyl-trans-zeatin 5'-phosphate + NADP(+) + H2O</text>
        <dbReference type="Rhea" id="RHEA:47812"/>
        <dbReference type="ChEBI" id="CHEBI:15377"/>
        <dbReference type="ChEBI" id="CHEBI:15378"/>
        <dbReference type="ChEBI" id="CHEBI:15379"/>
        <dbReference type="ChEBI" id="CHEBI:57526"/>
        <dbReference type="ChEBI" id="CHEBI:57783"/>
        <dbReference type="ChEBI" id="CHEBI:58349"/>
        <dbReference type="ChEBI" id="CHEBI:87947"/>
    </reaction>
</comment>
<comment type="catalytic activity">
    <reaction>
        <text>N(6)-(dimethylallyl)adenosine 5'-diphosphate + NADPH + O2 + H(+) = 9-ribosyl-trans-zeatin 5'-diphosphate + NADP(+) + H2O</text>
        <dbReference type="Rhea" id="RHEA:47816"/>
        <dbReference type="ChEBI" id="CHEBI:15377"/>
        <dbReference type="ChEBI" id="CHEBI:15378"/>
        <dbReference type="ChEBI" id="CHEBI:15379"/>
        <dbReference type="ChEBI" id="CHEBI:57783"/>
        <dbReference type="ChEBI" id="CHEBI:58349"/>
        <dbReference type="ChEBI" id="CHEBI:73533"/>
        <dbReference type="ChEBI" id="CHEBI:87950"/>
    </reaction>
</comment>
<comment type="catalytic activity">
    <reaction>
        <text>N(6)-(dimethylallyl)adenosine 5'-triphosphate + NADPH + O2 + H(+) = 9-ribosyl-trans-zeatin 5'-triphosphate + NADP(+) + H2O</text>
        <dbReference type="Rhea" id="RHEA:47820"/>
        <dbReference type="ChEBI" id="CHEBI:15377"/>
        <dbReference type="ChEBI" id="CHEBI:15378"/>
        <dbReference type="ChEBI" id="CHEBI:15379"/>
        <dbReference type="ChEBI" id="CHEBI:57783"/>
        <dbReference type="ChEBI" id="CHEBI:58349"/>
        <dbReference type="ChEBI" id="CHEBI:73532"/>
        <dbReference type="ChEBI" id="CHEBI:87953"/>
    </reaction>
</comment>
<comment type="cofactor">
    <cofactor evidence="1">
        <name>heme</name>
        <dbReference type="ChEBI" id="CHEBI:30413"/>
    </cofactor>
</comment>
<comment type="biophysicochemical properties">
    <kinetics>
        <KM>0.39 uM for isopentenyladenine riboside 5'-monophosphate</KM>
        <KM>0.76 uM for isopentenyladenine riboside 5'-diphosphate</KM>
        <KM>4.9 uM for isopentenyladenine riboside 5'-triphosphate</KM>
    </kinetics>
</comment>
<comment type="subcellular location">
    <subcellularLocation>
        <location evidence="4">Membrane</location>
        <topology evidence="4">Single-pass membrane protein</topology>
    </subcellularLocation>
</comment>
<comment type="tissue specificity">
    <text evidence="3">Specifically expressed in roots.</text>
</comment>
<comment type="induction">
    <text evidence="3">By trans-zeatin, cis-zeatin and isopentenyladenine in roots. Down-regulated by auxin and abscisic acid in roots.</text>
</comment>
<comment type="similarity">
    <text evidence="4">Belongs to the cytochrome P450 family.</text>
</comment>
<feature type="chain" id="PRO_0000411209" description="Cytokinin hydroxylase">
    <location>
        <begin position="1"/>
        <end position="512"/>
    </location>
</feature>
<feature type="transmembrane region" description="Helical" evidence="2">
    <location>
        <begin position="2"/>
        <end position="22"/>
    </location>
</feature>
<feature type="binding site" description="axial binding residue" evidence="1">
    <location>
        <position position="458"/>
    </location>
    <ligand>
        <name>heme</name>
        <dbReference type="ChEBI" id="CHEBI:30413"/>
    </ligand>
    <ligandPart>
        <name>Fe</name>
        <dbReference type="ChEBI" id="CHEBI:18248"/>
    </ligandPart>
</feature>
<organism>
    <name type="scientific">Arabidopsis thaliana</name>
    <name type="common">Mouse-ear cress</name>
    <dbReference type="NCBI Taxonomy" id="3702"/>
    <lineage>
        <taxon>Eukaryota</taxon>
        <taxon>Viridiplantae</taxon>
        <taxon>Streptophyta</taxon>
        <taxon>Embryophyta</taxon>
        <taxon>Tracheophyta</taxon>
        <taxon>Spermatophyta</taxon>
        <taxon>Magnoliopsida</taxon>
        <taxon>eudicotyledons</taxon>
        <taxon>Gunneridae</taxon>
        <taxon>Pentapetalae</taxon>
        <taxon>rosids</taxon>
        <taxon>malvids</taxon>
        <taxon>Brassicales</taxon>
        <taxon>Brassicaceae</taxon>
        <taxon>Camelineae</taxon>
        <taxon>Arabidopsis</taxon>
    </lineage>
</organism>
<dbReference type="EC" id="1.14.13.-"/>
<dbReference type="EMBL" id="AC004146">
    <property type="protein sequence ID" value="AAD10659.1"/>
    <property type="molecule type" value="Genomic_DNA"/>
</dbReference>
<dbReference type="EMBL" id="CP002684">
    <property type="protein sequence ID" value="AEE34597.1"/>
    <property type="molecule type" value="Genomic_DNA"/>
</dbReference>
<dbReference type="EMBL" id="BT011622">
    <property type="protein sequence ID" value="AAS47628.1"/>
    <property type="molecule type" value="mRNA"/>
</dbReference>
<dbReference type="EMBL" id="BT012626">
    <property type="protein sequence ID" value="AAT06445.1"/>
    <property type="molecule type" value="mRNA"/>
</dbReference>
<dbReference type="PIR" id="A96695">
    <property type="entry name" value="A96695"/>
</dbReference>
<dbReference type="RefSeq" id="NP_176882.1">
    <property type="nucleotide sequence ID" value="NM_105381.5"/>
</dbReference>
<dbReference type="SMR" id="Q9ZW95"/>
<dbReference type="FunCoup" id="Q9ZW95">
    <property type="interactions" value="383"/>
</dbReference>
<dbReference type="STRING" id="3702.Q9ZW95"/>
<dbReference type="PaxDb" id="3702-AT1G67110.1"/>
<dbReference type="EnsemblPlants" id="AT1G67110.1">
    <property type="protein sequence ID" value="AT1G67110.1"/>
    <property type="gene ID" value="AT1G67110"/>
</dbReference>
<dbReference type="GeneID" id="843031"/>
<dbReference type="Gramene" id="AT1G67110.1">
    <property type="protein sequence ID" value="AT1G67110.1"/>
    <property type="gene ID" value="AT1G67110"/>
</dbReference>
<dbReference type="KEGG" id="ath:AT1G67110"/>
<dbReference type="Araport" id="AT1G67110"/>
<dbReference type="TAIR" id="AT1G67110">
    <property type="gene designation" value="CYP735A2"/>
</dbReference>
<dbReference type="eggNOG" id="KOG0157">
    <property type="taxonomic scope" value="Eukaryota"/>
</dbReference>
<dbReference type="HOGENOM" id="CLU_001570_5_0_1"/>
<dbReference type="InParanoid" id="Q9ZW95"/>
<dbReference type="OMA" id="VGYDAQM"/>
<dbReference type="OrthoDB" id="1470350at2759"/>
<dbReference type="PhylomeDB" id="Q9ZW95"/>
<dbReference type="SABIO-RK" id="Q9ZW95"/>
<dbReference type="PRO" id="PR:Q9ZW95"/>
<dbReference type="Proteomes" id="UP000006548">
    <property type="component" value="Chromosome 1"/>
</dbReference>
<dbReference type="ExpressionAtlas" id="Q9ZW95">
    <property type="expression patterns" value="baseline and differential"/>
</dbReference>
<dbReference type="GO" id="GO:0016020">
    <property type="term" value="C:membrane"/>
    <property type="evidence" value="ECO:0007669"/>
    <property type="project" value="UniProtKB-SubCell"/>
</dbReference>
<dbReference type="GO" id="GO:0009506">
    <property type="term" value="C:plasmodesma"/>
    <property type="evidence" value="ECO:0007005"/>
    <property type="project" value="TAIR"/>
</dbReference>
<dbReference type="GO" id="GO:0020037">
    <property type="term" value="F:heme binding"/>
    <property type="evidence" value="ECO:0007669"/>
    <property type="project" value="InterPro"/>
</dbReference>
<dbReference type="GO" id="GO:0005506">
    <property type="term" value="F:iron ion binding"/>
    <property type="evidence" value="ECO:0007669"/>
    <property type="project" value="InterPro"/>
</dbReference>
<dbReference type="GO" id="GO:0004497">
    <property type="term" value="F:monooxygenase activity"/>
    <property type="evidence" value="ECO:0007669"/>
    <property type="project" value="UniProtKB-KW"/>
</dbReference>
<dbReference type="GO" id="GO:0016705">
    <property type="term" value="F:oxidoreductase activity, acting on paired donors, with incorporation or reduction of molecular oxygen"/>
    <property type="evidence" value="ECO:0007669"/>
    <property type="project" value="InterPro"/>
</dbReference>
<dbReference type="GO" id="GO:0033466">
    <property type="term" value="P:trans-zeatin biosynthetic process"/>
    <property type="evidence" value="ECO:0000314"/>
    <property type="project" value="UniProtKB"/>
</dbReference>
<dbReference type="CDD" id="cd11052">
    <property type="entry name" value="CYP72_clan"/>
    <property type="match status" value="1"/>
</dbReference>
<dbReference type="FunFam" id="1.10.630.10:FF:000029">
    <property type="entry name" value="Cytochrome P450 734A1"/>
    <property type="match status" value="1"/>
</dbReference>
<dbReference type="Gene3D" id="1.10.630.10">
    <property type="entry name" value="Cytochrome P450"/>
    <property type="match status" value="1"/>
</dbReference>
<dbReference type="InterPro" id="IPR001128">
    <property type="entry name" value="Cyt_P450"/>
</dbReference>
<dbReference type="InterPro" id="IPR002401">
    <property type="entry name" value="Cyt_P450_E_grp-I"/>
</dbReference>
<dbReference type="InterPro" id="IPR036396">
    <property type="entry name" value="Cyt_P450_sf"/>
</dbReference>
<dbReference type="InterPro" id="IPR050665">
    <property type="entry name" value="Cytochrome_P450_Monooxygen"/>
</dbReference>
<dbReference type="PANTHER" id="PTHR24282">
    <property type="entry name" value="CYTOCHROME P450 FAMILY MEMBER"/>
    <property type="match status" value="1"/>
</dbReference>
<dbReference type="PANTHER" id="PTHR24282:SF195">
    <property type="entry name" value="CYTOKININ HYDROXYLASE"/>
    <property type="match status" value="1"/>
</dbReference>
<dbReference type="Pfam" id="PF00067">
    <property type="entry name" value="p450"/>
    <property type="match status" value="1"/>
</dbReference>
<dbReference type="PRINTS" id="PR00463">
    <property type="entry name" value="EP450I"/>
</dbReference>
<dbReference type="PRINTS" id="PR00385">
    <property type="entry name" value="P450"/>
</dbReference>
<dbReference type="SUPFAM" id="SSF48264">
    <property type="entry name" value="Cytochrome P450"/>
    <property type="match status" value="1"/>
</dbReference>
<protein>
    <recommendedName>
        <fullName>Cytokinin hydroxylase</fullName>
        <ecNumber>1.14.13.-</ecNumber>
    </recommendedName>
    <alternativeName>
        <fullName>Cytochrome P450 35A2</fullName>
    </alternativeName>
</protein>
<keyword id="KW-0349">Heme</keyword>
<keyword id="KW-0408">Iron</keyword>
<keyword id="KW-0472">Membrane</keyword>
<keyword id="KW-0479">Metal-binding</keyword>
<keyword id="KW-0503">Monooxygenase</keyword>
<keyword id="KW-0521">NADP</keyword>
<keyword id="KW-0560">Oxidoreductase</keyword>
<keyword id="KW-1185">Reference proteome</keyword>
<keyword id="KW-0812">Transmembrane</keyword>
<keyword id="KW-1133">Transmembrane helix</keyword>
<reference key="1">
    <citation type="journal article" date="2000" name="Nature">
        <title>Sequence and analysis of chromosome 1 of the plant Arabidopsis thaliana.</title>
        <authorList>
            <person name="Theologis A."/>
            <person name="Ecker J.R."/>
            <person name="Palm C.J."/>
            <person name="Federspiel N.A."/>
            <person name="Kaul S."/>
            <person name="White O."/>
            <person name="Alonso J."/>
            <person name="Altafi H."/>
            <person name="Araujo R."/>
            <person name="Bowman C.L."/>
            <person name="Brooks S.Y."/>
            <person name="Buehler E."/>
            <person name="Chan A."/>
            <person name="Chao Q."/>
            <person name="Chen H."/>
            <person name="Cheuk R.F."/>
            <person name="Chin C.W."/>
            <person name="Chung M.K."/>
            <person name="Conn L."/>
            <person name="Conway A.B."/>
            <person name="Conway A.R."/>
            <person name="Creasy T.H."/>
            <person name="Dewar K."/>
            <person name="Dunn P."/>
            <person name="Etgu P."/>
            <person name="Feldblyum T.V."/>
            <person name="Feng J.-D."/>
            <person name="Fong B."/>
            <person name="Fujii C.Y."/>
            <person name="Gill J.E."/>
            <person name="Goldsmith A.D."/>
            <person name="Haas B."/>
            <person name="Hansen N.F."/>
            <person name="Hughes B."/>
            <person name="Huizar L."/>
            <person name="Hunter J.L."/>
            <person name="Jenkins J."/>
            <person name="Johnson-Hopson C."/>
            <person name="Khan S."/>
            <person name="Khaykin E."/>
            <person name="Kim C.J."/>
            <person name="Koo H.L."/>
            <person name="Kremenetskaia I."/>
            <person name="Kurtz D.B."/>
            <person name="Kwan A."/>
            <person name="Lam B."/>
            <person name="Langin-Hooper S."/>
            <person name="Lee A."/>
            <person name="Lee J.M."/>
            <person name="Lenz C.A."/>
            <person name="Li J.H."/>
            <person name="Li Y.-P."/>
            <person name="Lin X."/>
            <person name="Liu S.X."/>
            <person name="Liu Z.A."/>
            <person name="Luros J.S."/>
            <person name="Maiti R."/>
            <person name="Marziali A."/>
            <person name="Militscher J."/>
            <person name="Miranda M."/>
            <person name="Nguyen M."/>
            <person name="Nierman W.C."/>
            <person name="Osborne B.I."/>
            <person name="Pai G."/>
            <person name="Peterson J."/>
            <person name="Pham P.K."/>
            <person name="Rizzo M."/>
            <person name="Rooney T."/>
            <person name="Rowley D."/>
            <person name="Sakano H."/>
            <person name="Salzberg S.L."/>
            <person name="Schwartz J.R."/>
            <person name="Shinn P."/>
            <person name="Southwick A.M."/>
            <person name="Sun H."/>
            <person name="Tallon L.J."/>
            <person name="Tambunga G."/>
            <person name="Toriumi M.J."/>
            <person name="Town C.D."/>
            <person name="Utterback T."/>
            <person name="Van Aken S."/>
            <person name="Vaysberg M."/>
            <person name="Vysotskaia V.S."/>
            <person name="Walker M."/>
            <person name="Wu D."/>
            <person name="Yu G."/>
            <person name="Fraser C.M."/>
            <person name="Venter J.C."/>
            <person name="Davis R.W."/>
        </authorList>
    </citation>
    <scope>NUCLEOTIDE SEQUENCE [LARGE SCALE GENOMIC DNA]</scope>
    <source>
        <strain>cv. Columbia</strain>
    </source>
</reference>
<reference key="2">
    <citation type="journal article" date="2017" name="Plant J.">
        <title>Araport11: a complete reannotation of the Arabidopsis thaliana reference genome.</title>
        <authorList>
            <person name="Cheng C.Y."/>
            <person name="Krishnakumar V."/>
            <person name="Chan A.P."/>
            <person name="Thibaud-Nissen F."/>
            <person name="Schobel S."/>
            <person name="Town C.D."/>
        </authorList>
    </citation>
    <scope>GENOME REANNOTATION</scope>
    <source>
        <strain>cv. Columbia</strain>
    </source>
</reference>
<reference key="3">
    <citation type="submission" date="2004-02" db="EMBL/GenBank/DDBJ databases">
        <title>Arabidopsis cDNA clones.</title>
        <authorList>
            <person name="Kim C.J."/>
            <person name="Chen H."/>
            <person name="Cheuk R.F."/>
            <person name="Shinn P."/>
            <person name="Ecker J.R."/>
        </authorList>
    </citation>
    <scope>NUCLEOTIDE SEQUENCE [LARGE SCALE MRNA]</scope>
    <source>
        <strain>cv. Columbia</strain>
    </source>
</reference>
<reference key="4">
    <citation type="submission" date="2004-05" db="EMBL/GenBank/DDBJ databases">
        <title>Arabidopsis ORF clones.</title>
        <authorList>
            <person name="Cheuk R.F."/>
            <person name="Chen H."/>
            <person name="Kim C.J."/>
            <person name="Shinn P."/>
            <person name="Ecker J.R."/>
        </authorList>
    </citation>
    <scope>NUCLEOTIDE SEQUENCE [LARGE SCALE MRNA]</scope>
    <source>
        <strain>cv. Columbia</strain>
    </source>
</reference>
<reference key="5">
    <citation type="journal article" date="2004" name="J. Biol. Chem.">
        <title>Arabidopsis CYP735A1 and CYP735A2 encode cytokinin hydroxylases that catalyze the biosynthesis of trans-Zeatin.</title>
        <authorList>
            <person name="Takei K."/>
            <person name="Yamaya T."/>
            <person name="Sakakibara H."/>
        </authorList>
    </citation>
    <scope>FUNCTION</scope>
    <scope>TISSUE SPECIFICITY</scope>
    <scope>INDUCTION</scope>
</reference>
<gene>
    <name type="primary">CYP735A2</name>
    <name type="ordered locus">At1g67110</name>
    <name type="ORF">F5A8.3</name>
</gene>